<comment type="function">
    <text evidence="1">Produces ATP from ADP in the presence of a proton gradient across the membrane. The gamma chain is believed to be important in regulating ATPase activity and the flow of protons through the CF(0) complex.</text>
</comment>
<comment type="subunit">
    <text evidence="1">F-type ATPases have 2 components, CF(1) - the catalytic core - and CF(0) - the membrane proton channel. CF(1) has five subunits: alpha(3), beta(3), gamma(1), delta(1), epsilon(1). CF(0) has three main subunits: a, b and c.</text>
</comment>
<comment type="subcellular location">
    <subcellularLocation>
        <location evidence="1">Cell membrane</location>
        <topology evidence="1">Peripheral membrane protein</topology>
    </subcellularLocation>
</comment>
<comment type="similarity">
    <text evidence="1">Belongs to the ATPase gamma chain family.</text>
</comment>
<proteinExistence type="inferred from homology"/>
<feature type="chain" id="PRO_1000083777" description="ATP synthase gamma chain">
    <location>
        <begin position="1"/>
        <end position="290"/>
    </location>
</feature>
<gene>
    <name evidence="1" type="primary">atpG</name>
    <name type="ordered locus">Caur_3042</name>
</gene>
<name>ATPG_CHLAA</name>
<dbReference type="EMBL" id="CP000909">
    <property type="protein sequence ID" value="ABY36241.1"/>
    <property type="molecule type" value="Genomic_DNA"/>
</dbReference>
<dbReference type="RefSeq" id="WP_012258894.1">
    <property type="nucleotide sequence ID" value="NC_010175.1"/>
</dbReference>
<dbReference type="RefSeq" id="YP_001636630.1">
    <property type="nucleotide sequence ID" value="NC_010175.1"/>
</dbReference>
<dbReference type="SMR" id="A9WGS5"/>
<dbReference type="FunCoup" id="A9WGS5">
    <property type="interactions" value="482"/>
</dbReference>
<dbReference type="STRING" id="324602.Caur_3042"/>
<dbReference type="EnsemblBacteria" id="ABY36241">
    <property type="protein sequence ID" value="ABY36241"/>
    <property type="gene ID" value="Caur_3042"/>
</dbReference>
<dbReference type="KEGG" id="cau:Caur_3042"/>
<dbReference type="PATRIC" id="fig|324602.8.peg.3443"/>
<dbReference type="eggNOG" id="COG0224">
    <property type="taxonomic scope" value="Bacteria"/>
</dbReference>
<dbReference type="HOGENOM" id="CLU_050669_0_1_0"/>
<dbReference type="InParanoid" id="A9WGS5"/>
<dbReference type="Proteomes" id="UP000002008">
    <property type="component" value="Chromosome"/>
</dbReference>
<dbReference type="GO" id="GO:0005886">
    <property type="term" value="C:plasma membrane"/>
    <property type="evidence" value="ECO:0007669"/>
    <property type="project" value="UniProtKB-SubCell"/>
</dbReference>
<dbReference type="GO" id="GO:0045259">
    <property type="term" value="C:proton-transporting ATP synthase complex"/>
    <property type="evidence" value="ECO:0007669"/>
    <property type="project" value="UniProtKB-KW"/>
</dbReference>
<dbReference type="GO" id="GO:0005524">
    <property type="term" value="F:ATP binding"/>
    <property type="evidence" value="ECO:0007669"/>
    <property type="project" value="UniProtKB-UniRule"/>
</dbReference>
<dbReference type="GO" id="GO:0046933">
    <property type="term" value="F:proton-transporting ATP synthase activity, rotational mechanism"/>
    <property type="evidence" value="ECO:0007669"/>
    <property type="project" value="UniProtKB-UniRule"/>
</dbReference>
<dbReference type="GO" id="GO:0015986">
    <property type="term" value="P:proton motive force-driven ATP synthesis"/>
    <property type="evidence" value="ECO:0000318"/>
    <property type="project" value="GO_Central"/>
</dbReference>
<dbReference type="GO" id="GO:0042777">
    <property type="term" value="P:proton motive force-driven plasma membrane ATP synthesis"/>
    <property type="evidence" value="ECO:0007669"/>
    <property type="project" value="UniProtKB-UniRule"/>
</dbReference>
<dbReference type="CDD" id="cd12151">
    <property type="entry name" value="F1-ATPase_gamma"/>
    <property type="match status" value="1"/>
</dbReference>
<dbReference type="FunFam" id="1.10.287.80:FF:000009">
    <property type="entry name" value="ATP synthase gamma chain"/>
    <property type="match status" value="1"/>
</dbReference>
<dbReference type="FunFam" id="1.10.287.80:FF:000010">
    <property type="entry name" value="ATP synthase gamma chain"/>
    <property type="match status" value="1"/>
</dbReference>
<dbReference type="FunFam" id="3.40.1380.10:FF:000006">
    <property type="entry name" value="ATP synthase gamma chain"/>
    <property type="match status" value="1"/>
</dbReference>
<dbReference type="Gene3D" id="3.40.1380.10">
    <property type="match status" value="1"/>
</dbReference>
<dbReference type="Gene3D" id="1.10.287.80">
    <property type="entry name" value="ATP synthase, gamma subunit, helix hairpin domain"/>
    <property type="match status" value="2"/>
</dbReference>
<dbReference type="HAMAP" id="MF_00815">
    <property type="entry name" value="ATP_synth_gamma_bact"/>
    <property type="match status" value="1"/>
</dbReference>
<dbReference type="InterPro" id="IPR035968">
    <property type="entry name" value="ATP_synth_F1_ATPase_gsu"/>
</dbReference>
<dbReference type="InterPro" id="IPR000131">
    <property type="entry name" value="ATP_synth_F1_gsu"/>
</dbReference>
<dbReference type="InterPro" id="IPR023632">
    <property type="entry name" value="ATP_synth_F1_gsu_CS"/>
</dbReference>
<dbReference type="NCBIfam" id="TIGR01146">
    <property type="entry name" value="ATPsyn_F1gamma"/>
    <property type="match status" value="1"/>
</dbReference>
<dbReference type="NCBIfam" id="NF010709">
    <property type="entry name" value="PRK14111.1"/>
    <property type="match status" value="1"/>
</dbReference>
<dbReference type="PANTHER" id="PTHR11693">
    <property type="entry name" value="ATP SYNTHASE GAMMA CHAIN"/>
    <property type="match status" value="1"/>
</dbReference>
<dbReference type="PANTHER" id="PTHR11693:SF22">
    <property type="entry name" value="ATP SYNTHASE SUBUNIT GAMMA, MITOCHONDRIAL"/>
    <property type="match status" value="1"/>
</dbReference>
<dbReference type="Pfam" id="PF00231">
    <property type="entry name" value="ATP-synt"/>
    <property type="match status" value="1"/>
</dbReference>
<dbReference type="PRINTS" id="PR00126">
    <property type="entry name" value="ATPASEGAMMA"/>
</dbReference>
<dbReference type="SUPFAM" id="SSF52943">
    <property type="entry name" value="ATP synthase (F1-ATPase), gamma subunit"/>
    <property type="match status" value="1"/>
</dbReference>
<dbReference type="PROSITE" id="PS00153">
    <property type="entry name" value="ATPASE_GAMMA"/>
    <property type="match status" value="1"/>
</dbReference>
<organism>
    <name type="scientific">Chloroflexus aurantiacus (strain ATCC 29366 / DSM 635 / J-10-fl)</name>
    <dbReference type="NCBI Taxonomy" id="324602"/>
    <lineage>
        <taxon>Bacteria</taxon>
        <taxon>Bacillati</taxon>
        <taxon>Chloroflexota</taxon>
        <taxon>Chloroflexia</taxon>
        <taxon>Chloroflexales</taxon>
        <taxon>Chloroflexineae</taxon>
        <taxon>Chloroflexaceae</taxon>
        <taxon>Chloroflexus</taxon>
    </lineage>
</organism>
<accession>A9WGS5</accession>
<keyword id="KW-0066">ATP synthesis</keyword>
<keyword id="KW-1003">Cell membrane</keyword>
<keyword id="KW-0139">CF(1)</keyword>
<keyword id="KW-0375">Hydrogen ion transport</keyword>
<keyword id="KW-0406">Ion transport</keyword>
<keyword id="KW-0472">Membrane</keyword>
<keyword id="KW-1185">Reference proteome</keyword>
<keyword id="KW-0813">Transport</keyword>
<reference key="1">
    <citation type="journal article" date="2011" name="BMC Genomics">
        <title>Complete genome sequence of the filamentous anoxygenic phototrophic bacterium Chloroflexus aurantiacus.</title>
        <authorList>
            <person name="Tang K.H."/>
            <person name="Barry K."/>
            <person name="Chertkov O."/>
            <person name="Dalin E."/>
            <person name="Han C.S."/>
            <person name="Hauser L.J."/>
            <person name="Honchak B.M."/>
            <person name="Karbach L.E."/>
            <person name="Land M.L."/>
            <person name="Lapidus A."/>
            <person name="Larimer F.W."/>
            <person name="Mikhailova N."/>
            <person name="Pitluck S."/>
            <person name="Pierson B.K."/>
            <person name="Blankenship R.E."/>
        </authorList>
    </citation>
    <scope>NUCLEOTIDE SEQUENCE [LARGE SCALE GENOMIC DNA]</scope>
    <source>
        <strain>ATCC 29366 / DSM 635 / J-10-fl</strain>
    </source>
</reference>
<evidence type="ECO:0000255" key="1">
    <source>
        <dbReference type="HAMAP-Rule" id="MF_00815"/>
    </source>
</evidence>
<protein>
    <recommendedName>
        <fullName evidence="1">ATP synthase gamma chain</fullName>
    </recommendedName>
    <alternativeName>
        <fullName evidence="1">ATP synthase F1 sector gamma subunit</fullName>
    </alternativeName>
    <alternativeName>
        <fullName evidence="1">F-ATPase gamma subunit</fullName>
    </alternativeName>
</protein>
<sequence length="290" mass="32075">MPSSREIKRRIRSVKNVAQITRAMEMVSASKMRRAQRNVLATRPYADRMREVMANLTARVVGAARRGTLLEKRETVKSVALLVVTPDRGLCGSLVANVLRRAGRFITEQRAMGRTVDVYTFGRKGRDFFLRTGFAPAGEATRLGDAPKLEAILGVAISAINGFQSGKYDELYIIYSEFINTLVQRPAIKQLLPVESPDISTTTNVDYTYEPGEEEVLNSILPRYVETQIYQAVLESIASEHSARMVAMRNATNNAKDLVRDLTLSFNKARQAAITKEVSEIASGAAALTS</sequence>